<protein>
    <recommendedName>
        <fullName>Calcium-binding and spermatid-specific protein 1</fullName>
    </recommendedName>
</protein>
<sequence length="388" mass="42773">MAEDGLPKIYSHPPAESTKTTTEATIFFGADNTIPKSETTITSEGDHVTSVNDYMLENDFSTTTGNKLIPPKERQKSEDDVESHLEKEFATLMDIKNPMANESITENFLPVKTGNISSTDAISLIDFSTDIAKEDILLDTIDPGDKDVSLTSEVSGTPKESTAAIADTPILPNIMGKSDVSNYSSSVKFKVPADGNAHITDSSVPEAEITPTTERNLTTIPDITALTEEKITEIDLILPENDPNVVPKLTDSDEEKFITVFELTTTAERDKDNPEDALLTDEESTDEVSVWMERDMANEEESHSVLLTAVESRYDFVIPASVTMNLTEDLLTEEDLPENNRMESVTKNTDELSGTTPDLDAFSHKEDNFTTETGVFKLLKEEPDEFLI</sequence>
<evidence type="ECO:0000250" key="1">
    <source>
        <dbReference type="UniProtKB" id="Q68FX6"/>
    </source>
</evidence>
<evidence type="ECO:0000250" key="2">
    <source>
        <dbReference type="UniProtKB" id="Q8C633"/>
    </source>
</evidence>
<evidence type="ECO:0000256" key="3">
    <source>
        <dbReference type="SAM" id="MobiDB-lite"/>
    </source>
</evidence>
<gene>
    <name type="primary">CABS1</name>
</gene>
<dbReference type="EMBL" id="BC110036">
    <property type="protein sequence ID" value="AAI10037.1"/>
    <property type="molecule type" value="mRNA"/>
</dbReference>
<dbReference type="RefSeq" id="NP_001035629.1">
    <property type="nucleotide sequence ID" value="NM_001040539.2"/>
</dbReference>
<dbReference type="FunCoup" id="Q2TBJ9">
    <property type="interactions" value="179"/>
</dbReference>
<dbReference type="STRING" id="9913.ENSBTAP00000026444"/>
<dbReference type="PaxDb" id="9913-ENSBTAP00000026444"/>
<dbReference type="Ensembl" id="ENSBTAT00000026444.4">
    <property type="protein sequence ID" value="ENSBTAP00000026444.3"/>
    <property type="gene ID" value="ENSBTAG00000019849.4"/>
</dbReference>
<dbReference type="GeneID" id="519098"/>
<dbReference type="KEGG" id="bta:519098"/>
<dbReference type="CTD" id="85438"/>
<dbReference type="VEuPathDB" id="HostDB:ENSBTAG00000019849"/>
<dbReference type="VGNC" id="VGNC:26668">
    <property type="gene designation" value="CABS1"/>
</dbReference>
<dbReference type="eggNOG" id="ENOG502RWWC">
    <property type="taxonomic scope" value="Eukaryota"/>
</dbReference>
<dbReference type="GeneTree" id="ENSGT00390000015647"/>
<dbReference type="HOGENOM" id="CLU_719537_0_0_1"/>
<dbReference type="InParanoid" id="Q2TBJ9"/>
<dbReference type="OMA" id="DEVNVWM"/>
<dbReference type="OrthoDB" id="9836525at2759"/>
<dbReference type="TreeFam" id="TF338174"/>
<dbReference type="Proteomes" id="UP000009136">
    <property type="component" value="Chromosome 6"/>
</dbReference>
<dbReference type="Bgee" id="ENSBTAG00000019849">
    <property type="expression patterns" value="Expressed in semen and 13 other cell types or tissues"/>
</dbReference>
<dbReference type="GO" id="GO:0001669">
    <property type="term" value="C:acrosomal vesicle"/>
    <property type="evidence" value="ECO:0000250"/>
    <property type="project" value="UniProtKB"/>
</dbReference>
<dbReference type="GO" id="GO:0005743">
    <property type="term" value="C:mitochondrial inner membrane"/>
    <property type="evidence" value="ECO:0000318"/>
    <property type="project" value="GO_Central"/>
</dbReference>
<dbReference type="GO" id="GO:0031514">
    <property type="term" value="C:motile cilium"/>
    <property type="evidence" value="ECO:0000250"/>
    <property type="project" value="UniProtKB"/>
</dbReference>
<dbReference type="GO" id="GO:0097228">
    <property type="term" value="C:sperm principal piece"/>
    <property type="evidence" value="ECO:0000250"/>
    <property type="project" value="UniProtKB"/>
</dbReference>
<dbReference type="GO" id="GO:0005509">
    <property type="term" value="F:calcium ion binding"/>
    <property type="evidence" value="ECO:0000250"/>
    <property type="project" value="UniProtKB"/>
</dbReference>
<dbReference type="GO" id="GO:0030317">
    <property type="term" value="P:flagellated sperm motility"/>
    <property type="evidence" value="ECO:0000250"/>
    <property type="project" value="UniProtKB"/>
</dbReference>
<dbReference type="GO" id="GO:0007283">
    <property type="term" value="P:spermatogenesis"/>
    <property type="evidence" value="ECO:0000318"/>
    <property type="project" value="GO_Central"/>
</dbReference>
<dbReference type="InterPro" id="IPR026118">
    <property type="entry name" value="Ca-bd_spermatid"/>
</dbReference>
<dbReference type="PANTHER" id="PTHR22810:SF1">
    <property type="entry name" value="CALCIUM-BINDING AND SPERMATID-SPECIFIC PROTEIN 1"/>
    <property type="match status" value="1"/>
</dbReference>
<dbReference type="PANTHER" id="PTHR22810">
    <property type="entry name" value="TESTIS DEVELOPMENT PROTEIN NYD-SP26"/>
    <property type="match status" value="1"/>
</dbReference>
<dbReference type="Pfam" id="PF15367">
    <property type="entry name" value="CABS1"/>
    <property type="match status" value="1"/>
</dbReference>
<reference key="1">
    <citation type="submission" date="2005-11" db="EMBL/GenBank/DDBJ databases">
        <authorList>
            <consortium name="NIH - Mammalian Gene Collection (MGC) project"/>
        </authorList>
    </citation>
    <scope>NUCLEOTIDE SEQUENCE [LARGE SCALE MRNA]</scope>
    <source>
        <strain>Crossbred X Angus</strain>
        <tissue>Liver</tissue>
    </source>
</reference>
<comment type="function">
    <text evidence="1 2">Calcium-binding protein (By similarity). Essential for maintaining the structural integrity of the sperm flagella (By similarity).</text>
</comment>
<comment type="subcellular location">
    <subcellularLocation>
        <location evidence="1">Cytoplasm</location>
    </subcellularLocation>
    <subcellularLocation>
        <location evidence="1">Mitochondrion inner membrane</location>
    </subcellularLocation>
    <subcellularLocation>
        <location evidence="2">Cell projection</location>
        <location evidence="2">Cilium</location>
        <location evidence="2">Flagellum</location>
    </subcellularLocation>
    <subcellularLocation>
        <location evidence="2">Cytoplasmic vesicle</location>
        <location evidence="2">Secretory vesicle</location>
        <location evidence="2">Acrosome</location>
    </subcellularLocation>
    <text evidence="1 2">Mostly cytoplasmic, but associated with the mitochondrial inner membrane during the last steps of spermatid differentiation. Localizes to the principal piece of the sperm flagellum (By similarity).</text>
</comment>
<proteinExistence type="evidence at transcript level"/>
<name>CABS1_BOVIN</name>
<keyword id="KW-0106">Calcium</keyword>
<keyword id="KW-0966">Cell projection</keyword>
<keyword id="KW-0969">Cilium</keyword>
<keyword id="KW-0963">Cytoplasm</keyword>
<keyword id="KW-0968">Cytoplasmic vesicle</keyword>
<keyword id="KW-0282">Flagellum</keyword>
<keyword id="KW-0472">Membrane</keyword>
<keyword id="KW-0496">Mitochondrion</keyword>
<keyword id="KW-0999">Mitochondrion inner membrane</keyword>
<keyword id="KW-0597">Phosphoprotein</keyword>
<keyword id="KW-1185">Reference proteome</keyword>
<organism>
    <name type="scientific">Bos taurus</name>
    <name type="common">Bovine</name>
    <dbReference type="NCBI Taxonomy" id="9913"/>
    <lineage>
        <taxon>Eukaryota</taxon>
        <taxon>Metazoa</taxon>
        <taxon>Chordata</taxon>
        <taxon>Craniata</taxon>
        <taxon>Vertebrata</taxon>
        <taxon>Euteleostomi</taxon>
        <taxon>Mammalia</taxon>
        <taxon>Eutheria</taxon>
        <taxon>Laurasiatheria</taxon>
        <taxon>Artiodactyla</taxon>
        <taxon>Ruminantia</taxon>
        <taxon>Pecora</taxon>
        <taxon>Bovidae</taxon>
        <taxon>Bovinae</taxon>
        <taxon>Bos</taxon>
    </lineage>
</organism>
<feature type="chain" id="PRO_0000339177" description="Calcium-binding and spermatid-specific protein 1">
    <location>
        <begin position="1"/>
        <end position="388"/>
    </location>
</feature>
<feature type="region of interest" description="Disordered" evidence="3">
    <location>
        <begin position="1"/>
        <end position="20"/>
    </location>
</feature>
<feature type="modified residue" description="Phosphothreonine; by CK2" evidence="1">
    <location>
        <position position="280"/>
    </location>
</feature>
<feature type="modified residue" description="Phosphoserine" evidence="1">
    <location>
        <position position="312"/>
    </location>
</feature>
<feature type="modified residue" description="Phosphoserine" evidence="1">
    <location>
        <position position="344"/>
    </location>
</feature>
<accession>Q2TBJ9</accession>